<reference evidence="7" key="1">
    <citation type="journal article" date="2019" name="Mol. Biol. Evol.">
        <title>The birth and death of toxins with distinct functions: a case study in the sea anemone Nematostella.</title>
        <authorList>
            <person name="Sachkova M.Y."/>
            <person name="Singer S.A."/>
            <person name="Macrander J."/>
            <person name="Reitzel A.M."/>
            <person name="Peigneur S."/>
            <person name="Tytgat J."/>
            <person name="Moran Y."/>
        </authorList>
    </citation>
    <scope>NUCLEOTIDE SEQUENCE [MRNA]</scope>
    <scope>FUNCTION</scope>
    <scope>IDENTIFICATION BY MASS SPECTROMETRY</scope>
    <scope>DEVELOPMENTAL STAGE</scope>
    <scope>RECOMBINANT EXPRESSION</scope>
</reference>
<protein>
    <recommendedName>
        <fullName evidence="5">N.vectensis toxin 5</fullName>
        <shortName evidence="4">Nv5</shortName>
    </recommendedName>
</protein>
<evidence type="ECO:0000250" key="1">
    <source>
        <dbReference type="UniProtKB" id="P19651"/>
    </source>
</evidence>
<evidence type="ECO:0000255" key="2"/>
<evidence type="ECO:0000269" key="3">
    <source>
    </source>
</evidence>
<evidence type="ECO:0000303" key="4">
    <source>
    </source>
</evidence>
<evidence type="ECO:0000305" key="5"/>
<evidence type="ECO:0000305" key="6">
    <source>
    </source>
</evidence>
<evidence type="ECO:0000312" key="7">
    <source>
        <dbReference type="EMBL" id="QEV81588.1"/>
    </source>
</evidence>
<keyword id="KW-1015">Disulfide bond</keyword>
<keyword id="KW-0528">Neurotoxin</keyword>
<keyword id="KW-0732">Signal</keyword>
<keyword id="KW-0800">Toxin</keyword>
<dbReference type="EMBL" id="MK608362">
    <property type="protein sequence ID" value="QEV81588.1"/>
    <property type="molecule type" value="mRNA"/>
</dbReference>
<dbReference type="SMR" id="A0A5J6KCM0"/>
<dbReference type="GO" id="GO:0090729">
    <property type="term" value="F:toxin activity"/>
    <property type="evidence" value="ECO:0007669"/>
    <property type="project" value="UniProtKB-KW"/>
</dbReference>
<dbReference type="SUPFAM" id="SSF57392">
    <property type="entry name" value="Defensin-like"/>
    <property type="match status" value="1"/>
</dbReference>
<comment type="function">
    <text evidence="3">Has toxic effects on zebrafish larvae (PubMed:31134275). It causes contractile paralysis and twitching of the tail within 20 minutes, followed by death within 30 minutes (PubMed:31134275). Does not show any toxicity when injected into arthropods (cherry shrimps or grass shrimps) (PubMed:31134275).</text>
</comment>
<comment type="tissue specificity">
    <text evidence="3">Expressed in ectodermal gland cells (PubMed:31134275). In adult female tissues, highly transcribed in mesenteries (gametes-producing tissue) and slightly transcribed in tentacles, pharynx and physa (PubMed:31134275).</text>
</comment>
<comment type="developmental stage">
    <text evidence="3">Is detected in unfertilized eggs (at protein level). At mRNA level, its highest expression level is observed in the unfertilized eggs. Starting from blastula stage, its expression gradually drops (in gastrulae, early planulae, planulae, metamorphosing planulae, primary polyps, and juvenile polyps (2 and 4 months old)) till the metamorphosis stage and peaks again in the adult females (a small increase is observed in adult males).</text>
</comment>
<comment type="miscellaneous">
    <text evidence="3">Negative results: does not show activity on all ion channel tested at 10 uM (hNav1.1/SCN1A, rNav1.2/SCN2A, rNav1.3/SCN3A, rNav1.4/SCN4A, hNav1.5/SCN5A, mNav1.6/SCN8A, rNav1.8/SCN10A, BgNav1, Shaker IR, rKv1.1/KCNA1, rKv1.2/KCNA2, hKv1.3/KCNA3, rKv1.4/KCNA4, rKv1.5/KCNA5, rKv1.6/KCNA6, rKv2.1/KCNB1, hKv3.1/KCNC1, rKv4.3/KCND3, hKv7.2/KCNQ2, hKv7.3/KCNQ3, hKv10.1/KCNH1/EAG1, hKv11.1/KCNH2/ERG1).</text>
</comment>
<sequence length="84" mass="9357">MNSLLKVAVVCLVMLVACSSGRVVLPDDADTEYNSEYALAKRVNCKCEGGHEEGTYWVFGCPKNWYSCKSGYVYGRCCSQQWGK</sequence>
<accession>A0A5J6KCM0</accession>
<name>NV5_NEMVE</name>
<organism>
    <name type="scientific">Nematostella vectensis</name>
    <name type="common">Starlet sea anemone</name>
    <dbReference type="NCBI Taxonomy" id="45351"/>
    <lineage>
        <taxon>Eukaryota</taxon>
        <taxon>Metazoa</taxon>
        <taxon>Cnidaria</taxon>
        <taxon>Anthozoa</taxon>
        <taxon>Hexacorallia</taxon>
        <taxon>Actiniaria</taxon>
        <taxon>Edwardsiidae</taxon>
        <taxon>Nematostella</taxon>
    </lineage>
</organism>
<feature type="signal peptide" evidence="2">
    <location>
        <begin position="1"/>
        <end position="21"/>
    </location>
</feature>
<feature type="chain" id="PRO_5023909572" description="N.vectensis toxin 5" evidence="6">
    <location>
        <begin position="22"/>
        <end position="84"/>
    </location>
</feature>
<feature type="disulfide bond" evidence="1">
    <location>
        <begin position="45"/>
        <end position="77"/>
    </location>
</feature>
<feature type="disulfide bond" evidence="1">
    <location>
        <begin position="47"/>
        <end position="68"/>
    </location>
</feature>
<feature type="disulfide bond" evidence="1">
    <location>
        <begin position="61"/>
        <end position="78"/>
    </location>
</feature>
<proteinExistence type="evidence at protein level"/>